<name>KDSB_ECO57</name>
<reference key="1">
    <citation type="journal article" date="2001" name="Nature">
        <title>Genome sequence of enterohaemorrhagic Escherichia coli O157:H7.</title>
        <authorList>
            <person name="Perna N.T."/>
            <person name="Plunkett G. III"/>
            <person name="Burland V."/>
            <person name="Mau B."/>
            <person name="Glasner J.D."/>
            <person name="Rose D.J."/>
            <person name="Mayhew G.F."/>
            <person name="Evans P.S."/>
            <person name="Gregor J."/>
            <person name="Kirkpatrick H.A."/>
            <person name="Posfai G."/>
            <person name="Hackett J."/>
            <person name="Klink S."/>
            <person name="Boutin A."/>
            <person name="Shao Y."/>
            <person name="Miller L."/>
            <person name="Grotbeck E.J."/>
            <person name="Davis N.W."/>
            <person name="Lim A."/>
            <person name="Dimalanta E.T."/>
            <person name="Potamousis K."/>
            <person name="Apodaca J."/>
            <person name="Anantharaman T.S."/>
            <person name="Lin J."/>
            <person name="Yen G."/>
            <person name="Schwartz D.C."/>
            <person name="Welch R.A."/>
            <person name="Blattner F.R."/>
        </authorList>
    </citation>
    <scope>NUCLEOTIDE SEQUENCE [LARGE SCALE GENOMIC DNA]</scope>
    <source>
        <strain>O157:H7 / EDL933 / ATCC 700927 / EHEC</strain>
    </source>
</reference>
<reference key="2">
    <citation type="journal article" date="2001" name="DNA Res.">
        <title>Complete genome sequence of enterohemorrhagic Escherichia coli O157:H7 and genomic comparison with a laboratory strain K-12.</title>
        <authorList>
            <person name="Hayashi T."/>
            <person name="Makino K."/>
            <person name="Ohnishi M."/>
            <person name="Kurokawa K."/>
            <person name="Ishii K."/>
            <person name="Yokoyama K."/>
            <person name="Han C.-G."/>
            <person name="Ohtsubo E."/>
            <person name="Nakayama K."/>
            <person name="Murata T."/>
            <person name="Tanaka M."/>
            <person name="Tobe T."/>
            <person name="Iida T."/>
            <person name="Takami H."/>
            <person name="Honda T."/>
            <person name="Sasakawa C."/>
            <person name="Ogasawara N."/>
            <person name="Yasunaga T."/>
            <person name="Kuhara S."/>
            <person name="Shiba T."/>
            <person name="Hattori M."/>
            <person name="Shinagawa H."/>
        </authorList>
    </citation>
    <scope>NUCLEOTIDE SEQUENCE [LARGE SCALE GENOMIC DNA]</scope>
    <source>
        <strain>O157:H7 / Sakai / RIMD 0509952 / EHEC</strain>
    </source>
</reference>
<comment type="function">
    <text evidence="2">Activates KDO (a required 8-carbon sugar) for incorporation into bacterial lipopolysaccharide in Gram-negative bacteria.</text>
</comment>
<comment type="catalytic activity">
    <reaction evidence="2">
        <text>3-deoxy-alpha-D-manno-oct-2-ulosonate + CTP = CMP-3-deoxy-beta-D-manno-octulosonate + diphosphate</text>
        <dbReference type="Rhea" id="RHEA:23448"/>
        <dbReference type="ChEBI" id="CHEBI:33019"/>
        <dbReference type="ChEBI" id="CHEBI:37563"/>
        <dbReference type="ChEBI" id="CHEBI:85986"/>
        <dbReference type="ChEBI" id="CHEBI:85987"/>
        <dbReference type="EC" id="2.7.7.38"/>
    </reaction>
</comment>
<comment type="cofactor">
    <cofactor evidence="1">
        <name>Mg(2+)</name>
        <dbReference type="ChEBI" id="CHEBI:18420"/>
    </cofactor>
</comment>
<comment type="pathway">
    <text evidence="2">Nucleotide-sugar biosynthesis; CMP-3-deoxy-D-manno-octulosonate biosynthesis; CMP-3-deoxy-D-manno-octulosonate from 3-deoxy-D-manno-octulosonate and CTP: step 1/1.</text>
</comment>
<comment type="pathway">
    <text evidence="2">Bacterial outer membrane biogenesis; lipopolysaccharide biosynthesis.</text>
</comment>
<comment type="subcellular location">
    <subcellularLocation>
        <location evidence="2">Cytoplasm</location>
    </subcellularLocation>
</comment>
<comment type="similarity">
    <text evidence="2">Belongs to the KdsB family.</text>
</comment>
<gene>
    <name evidence="2" type="primary">kdsB</name>
    <name type="ordered locus">Z1264</name>
    <name type="ordered locus">ECs1001</name>
</gene>
<dbReference type="EC" id="2.7.7.38" evidence="2"/>
<dbReference type="EMBL" id="AE005174">
    <property type="protein sequence ID" value="AAG55403.1"/>
    <property type="molecule type" value="Genomic_DNA"/>
</dbReference>
<dbReference type="EMBL" id="BA000007">
    <property type="protein sequence ID" value="BAB34424.1"/>
    <property type="molecule type" value="Genomic_DNA"/>
</dbReference>
<dbReference type="PIR" id="A99754">
    <property type="entry name" value="A99754"/>
</dbReference>
<dbReference type="PIR" id="G85617">
    <property type="entry name" value="G85617"/>
</dbReference>
<dbReference type="RefSeq" id="NP_309028.1">
    <property type="nucleotide sequence ID" value="NC_002695.1"/>
</dbReference>
<dbReference type="RefSeq" id="WP_000011613.1">
    <property type="nucleotide sequence ID" value="NZ_VOAI01000006.1"/>
</dbReference>
<dbReference type="SMR" id="Q8XDG6"/>
<dbReference type="STRING" id="155864.Z1264"/>
<dbReference type="GeneID" id="75170992"/>
<dbReference type="GeneID" id="917744"/>
<dbReference type="KEGG" id="ece:Z1264"/>
<dbReference type="KEGG" id="ecs:ECs_1001"/>
<dbReference type="PATRIC" id="fig|386585.9.peg.1121"/>
<dbReference type="eggNOG" id="COG1212">
    <property type="taxonomic scope" value="Bacteria"/>
</dbReference>
<dbReference type="HOGENOM" id="CLU_065038_1_0_6"/>
<dbReference type="OMA" id="FMATCAK"/>
<dbReference type="UniPathway" id="UPA00030"/>
<dbReference type="UniPathway" id="UPA00358">
    <property type="reaction ID" value="UER00476"/>
</dbReference>
<dbReference type="Proteomes" id="UP000000558">
    <property type="component" value="Chromosome"/>
</dbReference>
<dbReference type="Proteomes" id="UP000002519">
    <property type="component" value="Chromosome"/>
</dbReference>
<dbReference type="GO" id="GO:0005829">
    <property type="term" value="C:cytosol"/>
    <property type="evidence" value="ECO:0007669"/>
    <property type="project" value="TreeGrafter"/>
</dbReference>
<dbReference type="GO" id="GO:0008690">
    <property type="term" value="F:3-deoxy-manno-octulosonate cytidylyltransferase activity"/>
    <property type="evidence" value="ECO:0007669"/>
    <property type="project" value="UniProtKB-UniRule"/>
</dbReference>
<dbReference type="GO" id="GO:0033468">
    <property type="term" value="P:CMP-keto-3-deoxy-D-manno-octulosonic acid biosynthetic process"/>
    <property type="evidence" value="ECO:0007669"/>
    <property type="project" value="UniProtKB-UniRule"/>
</dbReference>
<dbReference type="GO" id="GO:0009103">
    <property type="term" value="P:lipopolysaccharide biosynthetic process"/>
    <property type="evidence" value="ECO:0007669"/>
    <property type="project" value="UniProtKB-UniRule"/>
</dbReference>
<dbReference type="CDD" id="cd02517">
    <property type="entry name" value="CMP-KDO-Synthetase"/>
    <property type="match status" value="1"/>
</dbReference>
<dbReference type="FunFam" id="3.90.550.10:FF:000011">
    <property type="entry name" value="3-deoxy-manno-octulosonate cytidylyltransferase"/>
    <property type="match status" value="1"/>
</dbReference>
<dbReference type="Gene3D" id="3.90.550.10">
    <property type="entry name" value="Spore Coat Polysaccharide Biosynthesis Protein SpsA, Chain A"/>
    <property type="match status" value="1"/>
</dbReference>
<dbReference type="HAMAP" id="MF_00057">
    <property type="entry name" value="KdsB"/>
    <property type="match status" value="1"/>
</dbReference>
<dbReference type="InterPro" id="IPR003329">
    <property type="entry name" value="Cytidylyl_trans"/>
</dbReference>
<dbReference type="InterPro" id="IPR004528">
    <property type="entry name" value="KdsB"/>
</dbReference>
<dbReference type="InterPro" id="IPR029044">
    <property type="entry name" value="Nucleotide-diphossugar_trans"/>
</dbReference>
<dbReference type="NCBIfam" id="TIGR00466">
    <property type="entry name" value="kdsB"/>
    <property type="match status" value="1"/>
</dbReference>
<dbReference type="NCBIfam" id="NF003950">
    <property type="entry name" value="PRK05450.1-3"/>
    <property type="match status" value="1"/>
</dbReference>
<dbReference type="NCBIfam" id="NF003952">
    <property type="entry name" value="PRK05450.1-5"/>
    <property type="match status" value="1"/>
</dbReference>
<dbReference type="NCBIfam" id="NF009905">
    <property type="entry name" value="PRK13368.1"/>
    <property type="match status" value="1"/>
</dbReference>
<dbReference type="PANTHER" id="PTHR42866">
    <property type="entry name" value="3-DEOXY-MANNO-OCTULOSONATE CYTIDYLYLTRANSFERASE"/>
    <property type="match status" value="1"/>
</dbReference>
<dbReference type="PANTHER" id="PTHR42866:SF2">
    <property type="entry name" value="3-DEOXY-MANNO-OCTULOSONATE CYTIDYLYLTRANSFERASE, MITOCHONDRIAL"/>
    <property type="match status" value="1"/>
</dbReference>
<dbReference type="Pfam" id="PF02348">
    <property type="entry name" value="CTP_transf_3"/>
    <property type="match status" value="1"/>
</dbReference>
<dbReference type="SUPFAM" id="SSF53448">
    <property type="entry name" value="Nucleotide-diphospho-sugar transferases"/>
    <property type="match status" value="1"/>
</dbReference>
<keyword id="KW-0963">Cytoplasm</keyword>
<keyword id="KW-0448">Lipopolysaccharide biosynthesis</keyword>
<keyword id="KW-0460">Magnesium</keyword>
<keyword id="KW-0548">Nucleotidyltransferase</keyword>
<keyword id="KW-1185">Reference proteome</keyword>
<keyword id="KW-0808">Transferase</keyword>
<evidence type="ECO:0000250" key="1"/>
<evidence type="ECO:0000255" key="2">
    <source>
        <dbReference type="HAMAP-Rule" id="MF_00057"/>
    </source>
</evidence>
<protein>
    <recommendedName>
        <fullName evidence="2">3-deoxy-manno-octulosonate cytidylyltransferase</fullName>
        <ecNumber evidence="2">2.7.7.38</ecNumber>
    </recommendedName>
    <alternativeName>
        <fullName evidence="2">CMP-2-keto-3-deoxyoctulosonic acid synthase</fullName>
        <shortName evidence="2">CKS</shortName>
        <shortName evidence="2">CMP-KDO synthase</shortName>
    </alternativeName>
</protein>
<proteinExistence type="inferred from homology"/>
<feature type="initiator methionine" description="Removed" evidence="1">
    <location>
        <position position="1"/>
    </location>
</feature>
<feature type="chain" id="PRO_0000188503" description="3-deoxy-manno-octulosonate cytidylyltransferase">
    <location>
        <begin position="2"/>
        <end position="248"/>
    </location>
</feature>
<sequence>MSFVVIIPARYASTRLPGKPLVDINGKPMIVHVLERARESGAERIIVATDHEDVARAVEAAGGEVCMTRADHQSGTERLAEVVEKCAFSDDTVIVNVQGDEPMIPATIIRQVADNLAQRQVGMATLAVPIHNAEEAFNPNAVKVVLDAEGYALYFSRATIPWDRDRFAKGLETVGDNFLRHLGIYGYRAGFIRRYVTWQPSPLEHIEMLEQLRVLWYGEKIHVAVAHEVPGTGVDTPEDLERVRAEMR</sequence>
<organism>
    <name type="scientific">Escherichia coli O157:H7</name>
    <dbReference type="NCBI Taxonomy" id="83334"/>
    <lineage>
        <taxon>Bacteria</taxon>
        <taxon>Pseudomonadati</taxon>
        <taxon>Pseudomonadota</taxon>
        <taxon>Gammaproteobacteria</taxon>
        <taxon>Enterobacterales</taxon>
        <taxon>Enterobacteriaceae</taxon>
        <taxon>Escherichia</taxon>
    </lineage>
</organism>
<accession>Q8XDG6</accession>